<accession>C4KHI7</accession>
<name>AMZA_SACI6</name>
<protein>
    <recommendedName>
        <fullName evidence="1">Archaemetzincin</fullName>
        <ecNumber evidence="1">3.4.-.-</ecNumber>
    </recommendedName>
</protein>
<feature type="chain" id="PRO_1000216097" description="Archaemetzincin">
    <location>
        <begin position="1"/>
        <end position="183"/>
    </location>
</feature>
<feature type="active site" description="Proton acceptor" evidence="1">
    <location>
        <position position="132"/>
    </location>
</feature>
<feature type="binding site" evidence="1">
    <location>
        <position position="131"/>
    </location>
    <ligand>
        <name>Zn(2+)</name>
        <dbReference type="ChEBI" id="CHEBI:29105"/>
        <label>1</label>
        <note>catalytic</note>
    </ligand>
</feature>
<feature type="binding site" evidence="1">
    <location>
        <position position="135"/>
    </location>
    <ligand>
        <name>Zn(2+)</name>
        <dbReference type="ChEBI" id="CHEBI:29105"/>
        <label>1</label>
        <note>catalytic</note>
    </ligand>
</feature>
<feature type="binding site" evidence="1">
    <location>
        <position position="141"/>
    </location>
    <ligand>
        <name>Zn(2+)</name>
        <dbReference type="ChEBI" id="CHEBI:29105"/>
        <label>1</label>
        <note>catalytic</note>
    </ligand>
</feature>
<feature type="binding site" evidence="1">
    <location>
        <position position="142"/>
    </location>
    <ligand>
        <name>Zn(2+)</name>
        <dbReference type="ChEBI" id="CHEBI:29105"/>
        <label>2</label>
    </ligand>
</feature>
<feature type="binding site" evidence="1">
    <location>
        <position position="147"/>
    </location>
    <ligand>
        <name>Zn(2+)</name>
        <dbReference type="ChEBI" id="CHEBI:29105"/>
        <label>2</label>
    </ligand>
</feature>
<feature type="binding site" evidence="1">
    <location>
        <position position="166"/>
    </location>
    <ligand>
        <name>Zn(2+)</name>
        <dbReference type="ChEBI" id="CHEBI:29105"/>
        <label>2</label>
    </ligand>
</feature>
<feature type="binding site" evidence="1">
    <location>
        <position position="169"/>
    </location>
    <ligand>
        <name>Zn(2+)</name>
        <dbReference type="ChEBI" id="CHEBI:29105"/>
        <label>2</label>
    </ligand>
</feature>
<dbReference type="EC" id="3.4.-.-" evidence="1"/>
<dbReference type="EMBL" id="CP001402">
    <property type="protein sequence ID" value="ACR42051.1"/>
    <property type="molecule type" value="Genomic_DNA"/>
</dbReference>
<dbReference type="RefSeq" id="WP_012711449.1">
    <property type="nucleotide sequence ID" value="NC_012726.1"/>
</dbReference>
<dbReference type="SMR" id="C4KHI7"/>
<dbReference type="KEGG" id="sid:M164_1445"/>
<dbReference type="HOGENOM" id="CLU_108521_2_0_2"/>
<dbReference type="Proteomes" id="UP000001479">
    <property type="component" value="Chromosome"/>
</dbReference>
<dbReference type="GO" id="GO:0008237">
    <property type="term" value="F:metallopeptidase activity"/>
    <property type="evidence" value="ECO:0007669"/>
    <property type="project" value="UniProtKB-UniRule"/>
</dbReference>
<dbReference type="GO" id="GO:0008270">
    <property type="term" value="F:zinc ion binding"/>
    <property type="evidence" value="ECO:0007669"/>
    <property type="project" value="UniProtKB-UniRule"/>
</dbReference>
<dbReference type="GO" id="GO:0006508">
    <property type="term" value="P:proteolysis"/>
    <property type="evidence" value="ECO:0007669"/>
    <property type="project" value="UniProtKB-UniRule"/>
</dbReference>
<dbReference type="CDD" id="cd11375">
    <property type="entry name" value="Peptidase_M54"/>
    <property type="match status" value="1"/>
</dbReference>
<dbReference type="Gene3D" id="3.40.390.10">
    <property type="entry name" value="Collagenase (Catalytic Domain)"/>
    <property type="match status" value="1"/>
</dbReference>
<dbReference type="HAMAP" id="MF_01842">
    <property type="entry name" value="Archaemetzincin"/>
    <property type="match status" value="1"/>
</dbReference>
<dbReference type="InterPro" id="IPR024079">
    <property type="entry name" value="MetalloPept_cat_dom_sf"/>
</dbReference>
<dbReference type="InterPro" id="IPR012962">
    <property type="entry name" value="Pept_M54_archaemetzincn"/>
</dbReference>
<dbReference type="InterPro" id="IPR012091">
    <property type="entry name" value="Pept_M54_archaemetzncn_arc/bac"/>
</dbReference>
<dbReference type="NCBIfam" id="NF033823">
    <property type="entry name" value="archmetzin"/>
    <property type="match status" value="1"/>
</dbReference>
<dbReference type="PANTHER" id="PTHR15910">
    <property type="entry name" value="ARCHAEMETZINCIN"/>
    <property type="match status" value="1"/>
</dbReference>
<dbReference type="PANTHER" id="PTHR15910:SF1">
    <property type="entry name" value="ARCHAEMETZINCIN-2"/>
    <property type="match status" value="1"/>
</dbReference>
<dbReference type="Pfam" id="PF07998">
    <property type="entry name" value="Peptidase_M54"/>
    <property type="match status" value="1"/>
</dbReference>
<dbReference type="PIRSF" id="PIRSF005785">
    <property type="entry name" value="Zn-prot_arch"/>
    <property type="match status" value="1"/>
</dbReference>
<dbReference type="SUPFAM" id="SSF55486">
    <property type="entry name" value="Metalloproteases ('zincins'), catalytic domain"/>
    <property type="match status" value="1"/>
</dbReference>
<comment type="function">
    <text evidence="1">Probable zinc metalloprotease whose natural substrate is unknown.</text>
</comment>
<comment type="cofactor">
    <cofactor evidence="1">
        <name>Zn(2+)</name>
        <dbReference type="ChEBI" id="CHEBI:29105"/>
    </cofactor>
    <text evidence="1">Binds 2 Zn(2+) ions per subunit. One is catalytic, whereas the other seems to have a structural role.</text>
</comment>
<comment type="subunit">
    <text evidence="1">Monomer.</text>
</comment>
<comment type="similarity">
    <text evidence="1">Belongs to the peptidase M54 family.</text>
</comment>
<sequence>MTEMKILIVTLTYIEKSIIDEIVNNLSSYGLEVDILFDSRKYLPISAFNWERLQYDAEKVLSFLKSKYDFNYDSIIFLADSDGYIDGYNFVFGLTIDNFAIIFLNRLREEFYNRKPDLELFMKRVVKEVTHEAGHTLGLGHCNTIGCVMNFSNTVEDVDKKQARFCKNCIYKIENLSKYLQRK</sequence>
<reference key="1">
    <citation type="journal article" date="2009" name="Proc. Natl. Acad. Sci. U.S.A.">
        <title>Biogeography of the Sulfolobus islandicus pan-genome.</title>
        <authorList>
            <person name="Reno M.L."/>
            <person name="Held N.L."/>
            <person name="Fields C.J."/>
            <person name="Burke P.V."/>
            <person name="Whitaker R.J."/>
        </authorList>
    </citation>
    <scope>NUCLEOTIDE SEQUENCE [LARGE SCALE GENOMIC DNA]</scope>
    <source>
        <strain>M.16.4 / Kamchatka #3</strain>
    </source>
</reference>
<evidence type="ECO:0000255" key="1">
    <source>
        <dbReference type="HAMAP-Rule" id="MF_01842"/>
    </source>
</evidence>
<organism>
    <name type="scientific">Saccharolobus islandicus (strain M.16.4 / Kamchatka #3)</name>
    <name type="common">Sulfolobus islandicus</name>
    <dbReference type="NCBI Taxonomy" id="426118"/>
    <lineage>
        <taxon>Archaea</taxon>
        <taxon>Thermoproteota</taxon>
        <taxon>Thermoprotei</taxon>
        <taxon>Sulfolobales</taxon>
        <taxon>Sulfolobaceae</taxon>
        <taxon>Saccharolobus</taxon>
    </lineage>
</organism>
<gene>
    <name evidence="1" type="primary">amzA</name>
    <name type="ordered locus">M164_1445</name>
</gene>
<keyword id="KW-0378">Hydrolase</keyword>
<keyword id="KW-0479">Metal-binding</keyword>
<keyword id="KW-0482">Metalloprotease</keyword>
<keyword id="KW-0645">Protease</keyword>
<keyword id="KW-0862">Zinc</keyword>
<proteinExistence type="inferred from homology"/>